<protein>
    <recommendedName>
        <fullName evidence="1">1-deoxy-D-xylulose-5-phosphate synthase</fullName>
        <ecNumber evidence="1">2.2.1.7</ecNumber>
    </recommendedName>
    <alternativeName>
        <fullName evidence="1">1-deoxyxylulose-5-phosphate synthase</fullName>
        <shortName evidence="1">DXP synthase</shortName>
        <shortName evidence="1">DXPS</shortName>
    </alternativeName>
</protein>
<name>DXS_ECO81</name>
<reference key="1">
    <citation type="journal article" date="2009" name="PLoS Genet.">
        <title>Organised genome dynamics in the Escherichia coli species results in highly diverse adaptive paths.</title>
        <authorList>
            <person name="Touchon M."/>
            <person name="Hoede C."/>
            <person name="Tenaillon O."/>
            <person name="Barbe V."/>
            <person name="Baeriswyl S."/>
            <person name="Bidet P."/>
            <person name="Bingen E."/>
            <person name="Bonacorsi S."/>
            <person name="Bouchier C."/>
            <person name="Bouvet O."/>
            <person name="Calteau A."/>
            <person name="Chiapello H."/>
            <person name="Clermont O."/>
            <person name="Cruveiller S."/>
            <person name="Danchin A."/>
            <person name="Diard M."/>
            <person name="Dossat C."/>
            <person name="Karoui M.E."/>
            <person name="Frapy E."/>
            <person name="Garry L."/>
            <person name="Ghigo J.M."/>
            <person name="Gilles A.M."/>
            <person name="Johnson J."/>
            <person name="Le Bouguenec C."/>
            <person name="Lescat M."/>
            <person name="Mangenot S."/>
            <person name="Martinez-Jehanne V."/>
            <person name="Matic I."/>
            <person name="Nassif X."/>
            <person name="Oztas S."/>
            <person name="Petit M.A."/>
            <person name="Pichon C."/>
            <person name="Rouy Z."/>
            <person name="Ruf C.S."/>
            <person name="Schneider D."/>
            <person name="Tourret J."/>
            <person name="Vacherie B."/>
            <person name="Vallenet D."/>
            <person name="Medigue C."/>
            <person name="Rocha E.P.C."/>
            <person name="Denamur E."/>
        </authorList>
    </citation>
    <scope>NUCLEOTIDE SEQUENCE [LARGE SCALE GENOMIC DNA]</scope>
    <source>
        <strain>ED1a</strain>
    </source>
</reference>
<feature type="chain" id="PRO_1000132934" description="1-deoxy-D-xylulose-5-phosphate synthase">
    <location>
        <begin position="1"/>
        <end position="620"/>
    </location>
</feature>
<feature type="binding site" evidence="1">
    <location>
        <position position="80"/>
    </location>
    <ligand>
        <name>thiamine diphosphate</name>
        <dbReference type="ChEBI" id="CHEBI:58937"/>
    </ligand>
</feature>
<feature type="binding site" evidence="1">
    <location>
        <begin position="121"/>
        <end position="123"/>
    </location>
    <ligand>
        <name>thiamine diphosphate</name>
        <dbReference type="ChEBI" id="CHEBI:58937"/>
    </ligand>
</feature>
<feature type="binding site" evidence="1">
    <location>
        <position position="152"/>
    </location>
    <ligand>
        <name>Mg(2+)</name>
        <dbReference type="ChEBI" id="CHEBI:18420"/>
    </ligand>
</feature>
<feature type="binding site" evidence="1">
    <location>
        <begin position="153"/>
        <end position="154"/>
    </location>
    <ligand>
        <name>thiamine diphosphate</name>
        <dbReference type="ChEBI" id="CHEBI:58937"/>
    </ligand>
</feature>
<feature type="binding site" evidence="1">
    <location>
        <position position="181"/>
    </location>
    <ligand>
        <name>Mg(2+)</name>
        <dbReference type="ChEBI" id="CHEBI:18420"/>
    </ligand>
</feature>
<feature type="binding site" evidence="1">
    <location>
        <position position="181"/>
    </location>
    <ligand>
        <name>thiamine diphosphate</name>
        <dbReference type="ChEBI" id="CHEBI:58937"/>
    </ligand>
</feature>
<feature type="binding site" evidence="1">
    <location>
        <position position="288"/>
    </location>
    <ligand>
        <name>thiamine diphosphate</name>
        <dbReference type="ChEBI" id="CHEBI:58937"/>
    </ligand>
</feature>
<feature type="binding site" evidence="1">
    <location>
        <position position="370"/>
    </location>
    <ligand>
        <name>thiamine diphosphate</name>
        <dbReference type="ChEBI" id="CHEBI:58937"/>
    </ligand>
</feature>
<proteinExistence type="inferred from homology"/>
<dbReference type="EC" id="2.2.1.7" evidence="1"/>
<dbReference type="EMBL" id="CU928162">
    <property type="protein sequence ID" value="CAR06653.1"/>
    <property type="molecule type" value="Genomic_DNA"/>
</dbReference>
<dbReference type="RefSeq" id="WP_000006816.1">
    <property type="nucleotide sequence ID" value="NC_011745.1"/>
</dbReference>
<dbReference type="SMR" id="B7MQD5"/>
<dbReference type="KEGG" id="ecq:ECED1_0443"/>
<dbReference type="HOGENOM" id="CLU_009227_1_4_6"/>
<dbReference type="UniPathway" id="UPA00064">
    <property type="reaction ID" value="UER00091"/>
</dbReference>
<dbReference type="Proteomes" id="UP000000748">
    <property type="component" value="Chromosome"/>
</dbReference>
<dbReference type="GO" id="GO:0005829">
    <property type="term" value="C:cytosol"/>
    <property type="evidence" value="ECO:0007669"/>
    <property type="project" value="TreeGrafter"/>
</dbReference>
<dbReference type="GO" id="GO:0008661">
    <property type="term" value="F:1-deoxy-D-xylulose-5-phosphate synthase activity"/>
    <property type="evidence" value="ECO:0007669"/>
    <property type="project" value="UniProtKB-UniRule"/>
</dbReference>
<dbReference type="GO" id="GO:0000287">
    <property type="term" value="F:magnesium ion binding"/>
    <property type="evidence" value="ECO:0007669"/>
    <property type="project" value="UniProtKB-UniRule"/>
</dbReference>
<dbReference type="GO" id="GO:0030976">
    <property type="term" value="F:thiamine pyrophosphate binding"/>
    <property type="evidence" value="ECO:0007669"/>
    <property type="project" value="UniProtKB-UniRule"/>
</dbReference>
<dbReference type="GO" id="GO:0052865">
    <property type="term" value="P:1-deoxy-D-xylulose 5-phosphate biosynthetic process"/>
    <property type="evidence" value="ECO:0007669"/>
    <property type="project" value="UniProtKB-UniPathway"/>
</dbReference>
<dbReference type="GO" id="GO:0019288">
    <property type="term" value="P:isopentenyl diphosphate biosynthetic process, methylerythritol 4-phosphate pathway"/>
    <property type="evidence" value="ECO:0007669"/>
    <property type="project" value="TreeGrafter"/>
</dbReference>
<dbReference type="GO" id="GO:0016114">
    <property type="term" value="P:terpenoid biosynthetic process"/>
    <property type="evidence" value="ECO:0007669"/>
    <property type="project" value="UniProtKB-UniRule"/>
</dbReference>
<dbReference type="GO" id="GO:0009228">
    <property type="term" value="P:thiamine biosynthetic process"/>
    <property type="evidence" value="ECO:0007669"/>
    <property type="project" value="UniProtKB-UniRule"/>
</dbReference>
<dbReference type="CDD" id="cd02007">
    <property type="entry name" value="TPP_DXS"/>
    <property type="match status" value="1"/>
</dbReference>
<dbReference type="CDD" id="cd07033">
    <property type="entry name" value="TPP_PYR_DXS_TK_like"/>
    <property type="match status" value="1"/>
</dbReference>
<dbReference type="FunFam" id="3.40.50.920:FF:000002">
    <property type="entry name" value="1-deoxy-D-xylulose-5-phosphate synthase"/>
    <property type="match status" value="1"/>
</dbReference>
<dbReference type="FunFam" id="3.40.50.970:FF:000005">
    <property type="entry name" value="1-deoxy-D-xylulose-5-phosphate synthase"/>
    <property type="match status" value="1"/>
</dbReference>
<dbReference type="Gene3D" id="3.40.50.920">
    <property type="match status" value="1"/>
</dbReference>
<dbReference type="Gene3D" id="3.40.50.970">
    <property type="match status" value="2"/>
</dbReference>
<dbReference type="HAMAP" id="MF_00315">
    <property type="entry name" value="DXP_synth"/>
    <property type="match status" value="1"/>
</dbReference>
<dbReference type="InterPro" id="IPR005477">
    <property type="entry name" value="Dxylulose-5-P_synthase"/>
</dbReference>
<dbReference type="InterPro" id="IPR029061">
    <property type="entry name" value="THDP-binding"/>
</dbReference>
<dbReference type="InterPro" id="IPR009014">
    <property type="entry name" value="Transketo_C/PFOR_II"/>
</dbReference>
<dbReference type="InterPro" id="IPR005475">
    <property type="entry name" value="Transketolase-like_Pyr-bd"/>
</dbReference>
<dbReference type="InterPro" id="IPR020826">
    <property type="entry name" value="Transketolase_BS"/>
</dbReference>
<dbReference type="InterPro" id="IPR033248">
    <property type="entry name" value="Transketolase_C"/>
</dbReference>
<dbReference type="InterPro" id="IPR049557">
    <property type="entry name" value="Transketolase_CS"/>
</dbReference>
<dbReference type="NCBIfam" id="TIGR00204">
    <property type="entry name" value="dxs"/>
    <property type="match status" value="1"/>
</dbReference>
<dbReference type="NCBIfam" id="NF003933">
    <property type="entry name" value="PRK05444.2-2"/>
    <property type="match status" value="1"/>
</dbReference>
<dbReference type="PANTHER" id="PTHR43322">
    <property type="entry name" value="1-D-DEOXYXYLULOSE 5-PHOSPHATE SYNTHASE-RELATED"/>
    <property type="match status" value="1"/>
</dbReference>
<dbReference type="PANTHER" id="PTHR43322:SF5">
    <property type="entry name" value="1-DEOXY-D-XYLULOSE-5-PHOSPHATE SYNTHASE, CHLOROPLASTIC"/>
    <property type="match status" value="1"/>
</dbReference>
<dbReference type="Pfam" id="PF13292">
    <property type="entry name" value="DXP_synthase_N"/>
    <property type="match status" value="1"/>
</dbReference>
<dbReference type="Pfam" id="PF02779">
    <property type="entry name" value="Transket_pyr"/>
    <property type="match status" value="1"/>
</dbReference>
<dbReference type="Pfam" id="PF02780">
    <property type="entry name" value="Transketolase_C"/>
    <property type="match status" value="1"/>
</dbReference>
<dbReference type="SMART" id="SM00861">
    <property type="entry name" value="Transket_pyr"/>
    <property type="match status" value="1"/>
</dbReference>
<dbReference type="SUPFAM" id="SSF52518">
    <property type="entry name" value="Thiamin diphosphate-binding fold (THDP-binding)"/>
    <property type="match status" value="2"/>
</dbReference>
<dbReference type="SUPFAM" id="SSF52922">
    <property type="entry name" value="TK C-terminal domain-like"/>
    <property type="match status" value="1"/>
</dbReference>
<dbReference type="PROSITE" id="PS00801">
    <property type="entry name" value="TRANSKETOLASE_1"/>
    <property type="match status" value="1"/>
</dbReference>
<dbReference type="PROSITE" id="PS00802">
    <property type="entry name" value="TRANSKETOLASE_2"/>
    <property type="match status" value="1"/>
</dbReference>
<evidence type="ECO:0000255" key="1">
    <source>
        <dbReference type="HAMAP-Rule" id="MF_00315"/>
    </source>
</evidence>
<organism>
    <name type="scientific">Escherichia coli O81 (strain ED1a)</name>
    <dbReference type="NCBI Taxonomy" id="585397"/>
    <lineage>
        <taxon>Bacteria</taxon>
        <taxon>Pseudomonadati</taxon>
        <taxon>Pseudomonadota</taxon>
        <taxon>Gammaproteobacteria</taxon>
        <taxon>Enterobacterales</taxon>
        <taxon>Enterobacteriaceae</taxon>
        <taxon>Escherichia</taxon>
    </lineage>
</organism>
<keyword id="KW-0414">Isoprene biosynthesis</keyword>
<keyword id="KW-0460">Magnesium</keyword>
<keyword id="KW-0479">Metal-binding</keyword>
<keyword id="KW-0784">Thiamine biosynthesis</keyword>
<keyword id="KW-0786">Thiamine pyrophosphate</keyword>
<keyword id="KW-0808">Transferase</keyword>
<accession>B7MQD5</accession>
<gene>
    <name evidence="1" type="primary">dxs</name>
    <name type="ordered locus">ECED1_0443</name>
</gene>
<comment type="function">
    <text evidence="1">Catalyzes the acyloin condensation reaction between C atoms 2 and 3 of pyruvate and glyceraldehyde 3-phosphate to yield 1-deoxy-D-xylulose-5-phosphate (DXP).</text>
</comment>
<comment type="catalytic activity">
    <reaction evidence="1">
        <text>D-glyceraldehyde 3-phosphate + pyruvate + H(+) = 1-deoxy-D-xylulose 5-phosphate + CO2</text>
        <dbReference type="Rhea" id="RHEA:12605"/>
        <dbReference type="ChEBI" id="CHEBI:15361"/>
        <dbReference type="ChEBI" id="CHEBI:15378"/>
        <dbReference type="ChEBI" id="CHEBI:16526"/>
        <dbReference type="ChEBI" id="CHEBI:57792"/>
        <dbReference type="ChEBI" id="CHEBI:59776"/>
        <dbReference type="EC" id="2.2.1.7"/>
    </reaction>
</comment>
<comment type="cofactor">
    <cofactor evidence="1">
        <name>Mg(2+)</name>
        <dbReference type="ChEBI" id="CHEBI:18420"/>
    </cofactor>
    <text evidence="1">Binds 1 Mg(2+) ion per subunit.</text>
</comment>
<comment type="cofactor">
    <cofactor evidence="1">
        <name>thiamine diphosphate</name>
        <dbReference type="ChEBI" id="CHEBI:58937"/>
    </cofactor>
    <text evidence="1">Binds 1 thiamine pyrophosphate per subunit.</text>
</comment>
<comment type="pathway">
    <text evidence="1">Metabolic intermediate biosynthesis; 1-deoxy-D-xylulose 5-phosphate biosynthesis; 1-deoxy-D-xylulose 5-phosphate from D-glyceraldehyde 3-phosphate and pyruvate: step 1/1.</text>
</comment>
<comment type="subunit">
    <text evidence="1">Homodimer.</text>
</comment>
<comment type="similarity">
    <text evidence="1">Belongs to the transketolase family. DXPS subfamily.</text>
</comment>
<sequence length="620" mass="67633">MSFDIAKYPTLALVDSTQELRLLPKESLPKLCDELRRYLLDSVSRSSGHFASGLGTVELTVALHYVYNTPFDQLIWDVGHQAYPHKILTGRRDKIGTIRQKGGLHPFPWRGESEYDVLSVGHSSTSISAGIGIAVAAEKEGKNRRTVCVIGDGAITAGMAFEAMNHAGDIRPDMLVVLNDNEMSISENVGALNNHLAQLLSGKLYSSLREGGKKVFSGVPPIKELLKRTEEHIKGMVVPGTLFEELGFNYIGPVDGHDVLGLITTLKNMRDLKGPQFLHIMTKKGRGYEPAEKDPITFHAVPKFDPSSGCLPKSSGGLPSYSKIFGDWLCETAAKDNKLMAITPAMREGSGMVEFSRKFPDRYFDVAIAEQHAVTFAAGLAIGGYKPIVAIYSTFLQRAYDQVLHDVAIQKLPVLFAIDRAGIVGADGQTHQGAFDLSYLRCIPEMVIMTPSDENECRQMLYTGYHYNDGPSAVRYPRGNAVGVELTPLEKLPIGKGIVKRRGEKLAILNFGTLMPEAAKVAESLNATLVDMRFVKPLDEALILEMAASHEALVTVEENAIMGGAGSGVNEVLMAHRKPVPVLNIGLPDFFIPQGTQEEMRAELGLDATGMEAKIKAWLA</sequence>